<feature type="chain" id="PRO_0000123037" description="dTTP/UTP pyrophosphatase">
    <location>
        <begin position="1"/>
        <end position="200"/>
    </location>
</feature>
<feature type="active site" description="Proton acceptor" evidence="1">
    <location>
        <position position="80"/>
    </location>
</feature>
<feature type="site" description="Important for substrate specificity" evidence="1">
    <location>
        <position position="14"/>
    </location>
</feature>
<feature type="site" description="Important for substrate specificity" evidence="1">
    <location>
        <position position="81"/>
    </location>
</feature>
<feature type="site" description="Important for substrate specificity" evidence="1">
    <location>
        <position position="163"/>
    </location>
</feature>
<name>NTPPA_PASMU</name>
<gene>
    <name type="ordered locus">PM1268</name>
</gene>
<proteinExistence type="inferred from homology"/>
<dbReference type="EC" id="3.6.1.9" evidence="1"/>
<dbReference type="EMBL" id="AE004439">
    <property type="protein sequence ID" value="AAK03352.1"/>
    <property type="molecule type" value="Genomic_DNA"/>
</dbReference>
<dbReference type="RefSeq" id="WP_010907101.1">
    <property type="nucleotide sequence ID" value="NC_002663.1"/>
</dbReference>
<dbReference type="SMR" id="Q9CLG6"/>
<dbReference type="STRING" id="272843.PM1268"/>
<dbReference type="EnsemblBacteria" id="AAK03352">
    <property type="protein sequence ID" value="AAK03352"/>
    <property type="gene ID" value="PM1268"/>
</dbReference>
<dbReference type="KEGG" id="pmu:PM1268"/>
<dbReference type="PATRIC" id="fig|272843.6.peg.1279"/>
<dbReference type="HOGENOM" id="CLU_040416_2_1_6"/>
<dbReference type="OrthoDB" id="9807767at2"/>
<dbReference type="Proteomes" id="UP000000809">
    <property type="component" value="Chromosome"/>
</dbReference>
<dbReference type="GO" id="GO:0005737">
    <property type="term" value="C:cytoplasm"/>
    <property type="evidence" value="ECO:0007669"/>
    <property type="project" value="UniProtKB-SubCell"/>
</dbReference>
<dbReference type="GO" id="GO:0036218">
    <property type="term" value="F:dTTP diphosphatase activity"/>
    <property type="evidence" value="ECO:0007669"/>
    <property type="project" value="RHEA"/>
</dbReference>
<dbReference type="GO" id="GO:0036221">
    <property type="term" value="F:UTP diphosphatase activity"/>
    <property type="evidence" value="ECO:0007669"/>
    <property type="project" value="RHEA"/>
</dbReference>
<dbReference type="GO" id="GO:0009117">
    <property type="term" value="P:nucleotide metabolic process"/>
    <property type="evidence" value="ECO:0007669"/>
    <property type="project" value="UniProtKB-KW"/>
</dbReference>
<dbReference type="CDD" id="cd00555">
    <property type="entry name" value="Maf"/>
    <property type="match status" value="1"/>
</dbReference>
<dbReference type="Gene3D" id="3.90.950.10">
    <property type="match status" value="1"/>
</dbReference>
<dbReference type="HAMAP" id="MF_00528">
    <property type="entry name" value="Maf"/>
    <property type="match status" value="1"/>
</dbReference>
<dbReference type="InterPro" id="IPR029001">
    <property type="entry name" value="ITPase-like_fam"/>
</dbReference>
<dbReference type="InterPro" id="IPR003697">
    <property type="entry name" value="Maf-like"/>
</dbReference>
<dbReference type="NCBIfam" id="TIGR00172">
    <property type="entry name" value="maf"/>
    <property type="match status" value="1"/>
</dbReference>
<dbReference type="PANTHER" id="PTHR43213">
    <property type="entry name" value="BIFUNCTIONAL DTTP/UTP PYROPHOSPHATASE/METHYLTRANSFERASE PROTEIN-RELATED"/>
    <property type="match status" value="1"/>
</dbReference>
<dbReference type="PANTHER" id="PTHR43213:SF5">
    <property type="entry name" value="BIFUNCTIONAL DTTP_UTP PYROPHOSPHATASE_METHYLTRANSFERASE PROTEIN-RELATED"/>
    <property type="match status" value="1"/>
</dbReference>
<dbReference type="Pfam" id="PF02545">
    <property type="entry name" value="Maf"/>
    <property type="match status" value="1"/>
</dbReference>
<dbReference type="PIRSF" id="PIRSF006305">
    <property type="entry name" value="Maf"/>
    <property type="match status" value="1"/>
</dbReference>
<dbReference type="SUPFAM" id="SSF52972">
    <property type="entry name" value="ITPase-like"/>
    <property type="match status" value="1"/>
</dbReference>
<accession>Q9CLG6</accession>
<keyword id="KW-0963">Cytoplasm</keyword>
<keyword id="KW-0378">Hydrolase</keyword>
<keyword id="KW-0546">Nucleotide metabolism</keyword>
<keyword id="KW-1185">Reference proteome</keyword>
<reference key="1">
    <citation type="journal article" date="2001" name="Proc. Natl. Acad. Sci. U.S.A.">
        <title>Complete genomic sequence of Pasteurella multocida Pm70.</title>
        <authorList>
            <person name="May B.J."/>
            <person name="Zhang Q."/>
            <person name="Li L.L."/>
            <person name="Paustian M.L."/>
            <person name="Whittam T.S."/>
            <person name="Kapur V."/>
        </authorList>
    </citation>
    <scope>NUCLEOTIDE SEQUENCE [LARGE SCALE GENOMIC DNA]</scope>
    <source>
        <strain>Pm70</strain>
    </source>
</reference>
<comment type="function">
    <text evidence="1">Nucleoside triphosphate pyrophosphatase that hydrolyzes dTTP and UTP. May have a dual role in cell division arrest and in preventing the incorporation of modified nucleotides into cellular nucleic acids.</text>
</comment>
<comment type="catalytic activity">
    <reaction evidence="1">
        <text>dTTP + H2O = dTMP + diphosphate + H(+)</text>
        <dbReference type="Rhea" id="RHEA:28534"/>
        <dbReference type="ChEBI" id="CHEBI:15377"/>
        <dbReference type="ChEBI" id="CHEBI:15378"/>
        <dbReference type="ChEBI" id="CHEBI:33019"/>
        <dbReference type="ChEBI" id="CHEBI:37568"/>
        <dbReference type="ChEBI" id="CHEBI:63528"/>
        <dbReference type="EC" id="3.6.1.9"/>
    </reaction>
</comment>
<comment type="catalytic activity">
    <reaction evidence="1">
        <text>UTP + H2O = UMP + diphosphate + H(+)</text>
        <dbReference type="Rhea" id="RHEA:29395"/>
        <dbReference type="ChEBI" id="CHEBI:15377"/>
        <dbReference type="ChEBI" id="CHEBI:15378"/>
        <dbReference type="ChEBI" id="CHEBI:33019"/>
        <dbReference type="ChEBI" id="CHEBI:46398"/>
        <dbReference type="ChEBI" id="CHEBI:57865"/>
        <dbReference type="EC" id="3.6.1.9"/>
    </reaction>
</comment>
<comment type="cofactor">
    <cofactor evidence="1">
        <name>a divalent metal cation</name>
        <dbReference type="ChEBI" id="CHEBI:60240"/>
    </cofactor>
</comment>
<comment type="subcellular location">
    <subcellularLocation>
        <location evidence="1">Cytoplasm</location>
    </subcellularLocation>
</comment>
<comment type="similarity">
    <text evidence="1">Belongs to the Maf family. YhdE subfamily.</text>
</comment>
<evidence type="ECO:0000255" key="1">
    <source>
        <dbReference type="HAMAP-Rule" id="MF_00528"/>
    </source>
</evidence>
<protein>
    <recommendedName>
        <fullName evidence="1">dTTP/UTP pyrophosphatase</fullName>
        <shortName evidence="1">dTTPase/UTPase</shortName>
        <ecNumber evidence="1">3.6.1.9</ecNumber>
    </recommendedName>
    <alternativeName>
        <fullName evidence="1">Nucleoside triphosphate pyrophosphatase</fullName>
    </alternativeName>
    <alternativeName>
        <fullName evidence="1">Nucleotide pyrophosphatase</fullName>
        <shortName evidence="1">Nucleotide PPase</shortName>
    </alternativeName>
</protein>
<sequence length="200" mass="22225">MTDFQFYLASNSPRRAQILQQLGFRFALCCCEIDETPLPDEKGADYVLRMAIEKNNAARQQWQQAKFSQNRPHLPFLSADTSVILEDKILGKPKNEADARAMLRALSARTHQVITAVCVADENQMQTVIQTSHVRFKVLTEKEIQGYIATGEPMDKAGAYGIQQLGGVFVEHIEGSFSGVMGLPVCETVALLKAFGVELF</sequence>
<organism>
    <name type="scientific">Pasteurella multocida (strain Pm70)</name>
    <dbReference type="NCBI Taxonomy" id="272843"/>
    <lineage>
        <taxon>Bacteria</taxon>
        <taxon>Pseudomonadati</taxon>
        <taxon>Pseudomonadota</taxon>
        <taxon>Gammaproteobacteria</taxon>
        <taxon>Pasteurellales</taxon>
        <taxon>Pasteurellaceae</taxon>
        <taxon>Pasteurella</taxon>
    </lineage>
</organism>